<sequence length="232" mass="23920">MTATKMNAQEIIQFIANAEKKTSVKVTFEGQLATAVPSSVVKLGNVLFGDWKDVAPLLEGLVENQDYVVEQDARNSAVPLLDKRAINARIEPGAIIRDQVEIGDNAVIMMGAVINIGAEIGAGTMIDMGAILGGRAIVGKNSHVGAGAVLAGVIEPASAEPVRVGDNVLIGANAVVIEGVQIGSGSVVAAGAIVTQDVPENVVVAGVPARIIKEIDAQTQQKTALEDALRTL</sequence>
<keyword id="KW-0012">Acyltransferase</keyword>
<keyword id="KW-0028">Amino-acid biosynthesis</keyword>
<keyword id="KW-0220">Diaminopimelate biosynthesis</keyword>
<keyword id="KW-0457">Lysine biosynthesis</keyword>
<keyword id="KW-0677">Repeat</keyword>
<keyword id="KW-0808">Transferase</keyword>
<name>DAPH_STRPJ</name>
<dbReference type="EC" id="2.3.1.89" evidence="1"/>
<dbReference type="EMBL" id="FM211187">
    <property type="protein sequence ID" value="CAR69860.1"/>
    <property type="molecule type" value="Genomic_DNA"/>
</dbReference>
<dbReference type="SMR" id="B8ZPL9"/>
<dbReference type="KEGG" id="sne:SPN23F21210"/>
<dbReference type="HOGENOM" id="CLU_103751_0_0_9"/>
<dbReference type="UniPathway" id="UPA00034">
    <property type="reaction ID" value="UER00022"/>
</dbReference>
<dbReference type="GO" id="GO:0047200">
    <property type="term" value="F:tetrahydrodipicolinate N-acetyltransferase activity"/>
    <property type="evidence" value="ECO:0007669"/>
    <property type="project" value="UniProtKB-EC"/>
</dbReference>
<dbReference type="GO" id="GO:0019877">
    <property type="term" value="P:diaminopimelate biosynthetic process"/>
    <property type="evidence" value="ECO:0007669"/>
    <property type="project" value="UniProtKB-UniRule"/>
</dbReference>
<dbReference type="GO" id="GO:0009089">
    <property type="term" value="P:lysine biosynthetic process via diaminopimelate"/>
    <property type="evidence" value="ECO:0007669"/>
    <property type="project" value="UniProtKB-UniRule"/>
</dbReference>
<dbReference type="Gene3D" id="2.160.10.10">
    <property type="entry name" value="Hexapeptide repeat proteins"/>
    <property type="match status" value="1"/>
</dbReference>
<dbReference type="Gene3D" id="3.30.70.250">
    <property type="entry name" value="Malonyl-CoA ACP transacylase, ACP-binding"/>
    <property type="match status" value="1"/>
</dbReference>
<dbReference type="HAMAP" id="MF_01691">
    <property type="entry name" value="DapH"/>
    <property type="match status" value="1"/>
</dbReference>
<dbReference type="InterPro" id="IPR019873">
    <property type="entry name" value="DapH"/>
</dbReference>
<dbReference type="InterPro" id="IPR013710">
    <property type="entry name" value="DapH_N"/>
</dbReference>
<dbReference type="InterPro" id="IPR001451">
    <property type="entry name" value="Hexapep"/>
</dbReference>
<dbReference type="InterPro" id="IPR018357">
    <property type="entry name" value="Hexapep_transf_CS"/>
</dbReference>
<dbReference type="InterPro" id="IPR050179">
    <property type="entry name" value="Trans_hexapeptide_repeat"/>
</dbReference>
<dbReference type="InterPro" id="IPR011004">
    <property type="entry name" value="Trimer_LpxA-like_sf"/>
</dbReference>
<dbReference type="NCBIfam" id="TIGR03532">
    <property type="entry name" value="DapD_Ac"/>
    <property type="match status" value="1"/>
</dbReference>
<dbReference type="PANTHER" id="PTHR43300:SF10">
    <property type="entry name" value="2,3,4,5-TETRAHYDROPYRIDINE-2,6-DICARBOXYLATE N-ACETYLTRANSFERASE"/>
    <property type="match status" value="1"/>
</dbReference>
<dbReference type="PANTHER" id="PTHR43300">
    <property type="entry name" value="ACETYLTRANSFERASE"/>
    <property type="match status" value="1"/>
</dbReference>
<dbReference type="Pfam" id="PF08503">
    <property type="entry name" value="DapH_N"/>
    <property type="match status" value="1"/>
</dbReference>
<dbReference type="Pfam" id="PF00132">
    <property type="entry name" value="Hexapep"/>
    <property type="match status" value="1"/>
</dbReference>
<dbReference type="Pfam" id="PF14602">
    <property type="entry name" value="Hexapep_2"/>
    <property type="match status" value="2"/>
</dbReference>
<dbReference type="SUPFAM" id="SSF51161">
    <property type="entry name" value="Trimeric LpxA-like enzymes"/>
    <property type="match status" value="1"/>
</dbReference>
<dbReference type="PROSITE" id="PS00101">
    <property type="entry name" value="HEXAPEP_TRANSFERASES"/>
    <property type="match status" value="2"/>
</dbReference>
<accession>B8ZPL9</accession>
<evidence type="ECO:0000255" key="1">
    <source>
        <dbReference type="HAMAP-Rule" id="MF_01691"/>
    </source>
</evidence>
<proteinExistence type="inferred from homology"/>
<feature type="chain" id="PRO_0000376709" description="2,3,4,5-tetrahydropyridine-2,6-dicarboxylate N-acetyltransferase">
    <location>
        <begin position="1"/>
        <end position="232"/>
    </location>
</feature>
<reference key="1">
    <citation type="journal article" date="2009" name="J. Bacteriol.">
        <title>Role of conjugative elements in the evolution of the multidrug-resistant pandemic clone Streptococcus pneumoniae Spain23F ST81.</title>
        <authorList>
            <person name="Croucher N.J."/>
            <person name="Walker D."/>
            <person name="Romero P."/>
            <person name="Lennard N."/>
            <person name="Paterson G.K."/>
            <person name="Bason N.C."/>
            <person name="Mitchell A.M."/>
            <person name="Quail M.A."/>
            <person name="Andrew P.W."/>
            <person name="Parkhill J."/>
            <person name="Bentley S.D."/>
            <person name="Mitchell T.J."/>
        </authorList>
    </citation>
    <scope>NUCLEOTIDE SEQUENCE [LARGE SCALE GENOMIC DNA]</scope>
    <source>
        <strain>ATCC 700669 / Spain 23F-1</strain>
    </source>
</reference>
<comment type="function">
    <text evidence="1">Catalyzes the transfer of an acetyl group from acetyl-CoA to tetrahydrodipicolinate.</text>
</comment>
<comment type="catalytic activity">
    <reaction evidence="1">
        <text>(S)-2,3,4,5-tetrahydrodipicolinate + acetyl-CoA + H2O = L-2-acetamido-6-oxoheptanedioate + CoA</text>
        <dbReference type="Rhea" id="RHEA:13085"/>
        <dbReference type="ChEBI" id="CHEBI:15377"/>
        <dbReference type="ChEBI" id="CHEBI:16845"/>
        <dbReference type="ChEBI" id="CHEBI:57287"/>
        <dbReference type="ChEBI" id="CHEBI:57288"/>
        <dbReference type="ChEBI" id="CHEBI:58117"/>
        <dbReference type="EC" id="2.3.1.89"/>
    </reaction>
</comment>
<comment type="pathway">
    <text evidence="1">Amino-acid biosynthesis; L-lysine biosynthesis via DAP pathway; LL-2,6-diaminopimelate from (S)-tetrahydrodipicolinate (acetylase route): step 1/3.</text>
</comment>
<comment type="similarity">
    <text evidence="1">Belongs to the transferase hexapeptide repeat family. DapH subfamily.</text>
</comment>
<organism>
    <name type="scientific">Streptococcus pneumoniae (strain ATCC 700669 / Spain 23F-1)</name>
    <dbReference type="NCBI Taxonomy" id="561276"/>
    <lineage>
        <taxon>Bacteria</taxon>
        <taxon>Bacillati</taxon>
        <taxon>Bacillota</taxon>
        <taxon>Bacilli</taxon>
        <taxon>Lactobacillales</taxon>
        <taxon>Streptococcaceae</taxon>
        <taxon>Streptococcus</taxon>
    </lineage>
</organism>
<protein>
    <recommendedName>
        <fullName evidence="1">2,3,4,5-tetrahydropyridine-2,6-dicarboxylate N-acetyltransferase</fullName>
        <ecNumber evidence="1">2.3.1.89</ecNumber>
    </recommendedName>
    <alternativeName>
        <fullName evidence="1">Tetrahydrodipicolinate N-acetyltransferase</fullName>
        <shortName evidence="1">THP acetyltransferase</shortName>
        <shortName evidence="1">Tetrahydropicolinate acetylase</shortName>
    </alternativeName>
</protein>
<gene>
    <name evidence="1" type="primary">dapH</name>
    <name type="ordered locus">SPN23F21210</name>
</gene>